<gene>
    <name evidence="1" type="primary">nuoK</name>
    <name type="ordered locus">NE1767</name>
</gene>
<reference key="1">
    <citation type="journal article" date="2003" name="J. Bacteriol.">
        <title>Complete genome sequence of the ammonia-oxidizing bacterium and obligate chemolithoautotroph Nitrosomonas europaea.</title>
        <authorList>
            <person name="Chain P."/>
            <person name="Lamerdin J.E."/>
            <person name="Larimer F.W."/>
            <person name="Regala W."/>
            <person name="Lao V."/>
            <person name="Land M.L."/>
            <person name="Hauser L."/>
            <person name="Hooper A.B."/>
            <person name="Klotz M.G."/>
            <person name="Norton J."/>
            <person name="Sayavedra-Soto L.A."/>
            <person name="Arciero D.M."/>
            <person name="Hommes N.G."/>
            <person name="Whittaker M.M."/>
            <person name="Arp D.J."/>
        </authorList>
    </citation>
    <scope>NUCLEOTIDE SEQUENCE [LARGE SCALE GENOMIC DNA]</scope>
    <source>
        <strain>ATCC 19718 / CIP 103999 / KCTC 2705 / NBRC 14298</strain>
    </source>
</reference>
<sequence length="101" mass="11037">MVSLSHYLVLGALLFAIGVVGIFLNRKNVIILLMSIELMLLAVNMNFVAFSHFLQDTAGQIFVFFILTVAAAEAAIGLAILVALFRNLRTINVDDLDELKG</sequence>
<feature type="chain" id="PRO_0000390147" description="NADH-quinone oxidoreductase subunit K">
    <location>
        <begin position="1"/>
        <end position="101"/>
    </location>
</feature>
<feature type="transmembrane region" description="Helical" evidence="1">
    <location>
        <begin position="4"/>
        <end position="24"/>
    </location>
</feature>
<feature type="transmembrane region" description="Helical" evidence="1">
    <location>
        <begin position="30"/>
        <end position="50"/>
    </location>
</feature>
<feature type="transmembrane region" description="Helical" evidence="1">
    <location>
        <begin position="61"/>
        <end position="81"/>
    </location>
</feature>
<accession>Q82TV3</accession>
<dbReference type="EC" id="7.1.1.-" evidence="1"/>
<dbReference type="EMBL" id="AL954747">
    <property type="protein sequence ID" value="CAD85678.1"/>
    <property type="molecule type" value="Genomic_DNA"/>
</dbReference>
<dbReference type="RefSeq" id="WP_011112318.1">
    <property type="nucleotide sequence ID" value="NC_004757.1"/>
</dbReference>
<dbReference type="SMR" id="Q82TV3"/>
<dbReference type="STRING" id="228410.NE1767"/>
<dbReference type="GeneID" id="87104928"/>
<dbReference type="KEGG" id="neu:NE1767"/>
<dbReference type="eggNOG" id="COG0713">
    <property type="taxonomic scope" value="Bacteria"/>
</dbReference>
<dbReference type="HOGENOM" id="CLU_144724_2_0_4"/>
<dbReference type="PhylomeDB" id="Q82TV3"/>
<dbReference type="Proteomes" id="UP000001416">
    <property type="component" value="Chromosome"/>
</dbReference>
<dbReference type="GO" id="GO:0030964">
    <property type="term" value="C:NADH dehydrogenase complex"/>
    <property type="evidence" value="ECO:0007669"/>
    <property type="project" value="TreeGrafter"/>
</dbReference>
<dbReference type="GO" id="GO:0005886">
    <property type="term" value="C:plasma membrane"/>
    <property type="evidence" value="ECO:0007669"/>
    <property type="project" value="UniProtKB-SubCell"/>
</dbReference>
<dbReference type="GO" id="GO:0050136">
    <property type="term" value="F:NADH:ubiquinone reductase (non-electrogenic) activity"/>
    <property type="evidence" value="ECO:0007669"/>
    <property type="project" value="UniProtKB-UniRule"/>
</dbReference>
<dbReference type="GO" id="GO:0048038">
    <property type="term" value="F:quinone binding"/>
    <property type="evidence" value="ECO:0007669"/>
    <property type="project" value="UniProtKB-KW"/>
</dbReference>
<dbReference type="GO" id="GO:0042773">
    <property type="term" value="P:ATP synthesis coupled electron transport"/>
    <property type="evidence" value="ECO:0007669"/>
    <property type="project" value="InterPro"/>
</dbReference>
<dbReference type="FunFam" id="1.10.287.3510:FF:000001">
    <property type="entry name" value="NADH-quinone oxidoreductase subunit K"/>
    <property type="match status" value="1"/>
</dbReference>
<dbReference type="Gene3D" id="1.10.287.3510">
    <property type="match status" value="1"/>
</dbReference>
<dbReference type="HAMAP" id="MF_01456">
    <property type="entry name" value="NDH1_NuoK"/>
    <property type="match status" value="1"/>
</dbReference>
<dbReference type="InterPro" id="IPR001133">
    <property type="entry name" value="NADH_UbQ_OxRdtase_chain4L/K"/>
</dbReference>
<dbReference type="InterPro" id="IPR039428">
    <property type="entry name" value="NUOK/Mnh_C1-like"/>
</dbReference>
<dbReference type="NCBIfam" id="NF004320">
    <property type="entry name" value="PRK05715.1-2"/>
    <property type="match status" value="1"/>
</dbReference>
<dbReference type="NCBIfam" id="NF004321">
    <property type="entry name" value="PRK05715.1-3"/>
    <property type="match status" value="1"/>
</dbReference>
<dbReference type="NCBIfam" id="NF004323">
    <property type="entry name" value="PRK05715.1-5"/>
    <property type="match status" value="1"/>
</dbReference>
<dbReference type="PANTHER" id="PTHR11434:SF21">
    <property type="entry name" value="NADH DEHYDROGENASE SUBUNIT 4L-RELATED"/>
    <property type="match status" value="1"/>
</dbReference>
<dbReference type="PANTHER" id="PTHR11434">
    <property type="entry name" value="NADH-UBIQUINONE OXIDOREDUCTASE SUBUNIT ND4L"/>
    <property type="match status" value="1"/>
</dbReference>
<dbReference type="Pfam" id="PF00420">
    <property type="entry name" value="Oxidored_q2"/>
    <property type="match status" value="1"/>
</dbReference>
<evidence type="ECO:0000255" key="1">
    <source>
        <dbReference type="HAMAP-Rule" id="MF_01456"/>
    </source>
</evidence>
<keyword id="KW-0997">Cell inner membrane</keyword>
<keyword id="KW-1003">Cell membrane</keyword>
<keyword id="KW-0472">Membrane</keyword>
<keyword id="KW-0520">NAD</keyword>
<keyword id="KW-0874">Quinone</keyword>
<keyword id="KW-1185">Reference proteome</keyword>
<keyword id="KW-1278">Translocase</keyword>
<keyword id="KW-0812">Transmembrane</keyword>
<keyword id="KW-1133">Transmembrane helix</keyword>
<keyword id="KW-0813">Transport</keyword>
<keyword id="KW-0830">Ubiquinone</keyword>
<organism>
    <name type="scientific">Nitrosomonas europaea (strain ATCC 19718 / CIP 103999 / KCTC 2705 / NBRC 14298)</name>
    <dbReference type="NCBI Taxonomy" id="228410"/>
    <lineage>
        <taxon>Bacteria</taxon>
        <taxon>Pseudomonadati</taxon>
        <taxon>Pseudomonadota</taxon>
        <taxon>Betaproteobacteria</taxon>
        <taxon>Nitrosomonadales</taxon>
        <taxon>Nitrosomonadaceae</taxon>
        <taxon>Nitrosomonas</taxon>
    </lineage>
</organism>
<comment type="function">
    <text evidence="1">NDH-1 shuttles electrons from NADH, via FMN and iron-sulfur (Fe-S) centers, to quinones in the respiratory chain. The immediate electron acceptor for the enzyme in this species is believed to be ubiquinone. Couples the redox reaction to proton translocation (for every two electrons transferred, four hydrogen ions are translocated across the cytoplasmic membrane), and thus conserves the redox energy in a proton gradient.</text>
</comment>
<comment type="catalytic activity">
    <reaction evidence="1">
        <text>a quinone + NADH + 5 H(+)(in) = a quinol + NAD(+) + 4 H(+)(out)</text>
        <dbReference type="Rhea" id="RHEA:57888"/>
        <dbReference type="ChEBI" id="CHEBI:15378"/>
        <dbReference type="ChEBI" id="CHEBI:24646"/>
        <dbReference type="ChEBI" id="CHEBI:57540"/>
        <dbReference type="ChEBI" id="CHEBI:57945"/>
        <dbReference type="ChEBI" id="CHEBI:132124"/>
    </reaction>
</comment>
<comment type="subunit">
    <text evidence="1">NDH-1 is composed of 14 different subunits. Subunits NuoA, H, J, K, L, M, N constitute the membrane sector of the complex.</text>
</comment>
<comment type="subcellular location">
    <subcellularLocation>
        <location evidence="1">Cell inner membrane</location>
        <topology evidence="1">Multi-pass membrane protein</topology>
    </subcellularLocation>
</comment>
<comment type="similarity">
    <text evidence="1">Belongs to the complex I subunit 4L family.</text>
</comment>
<proteinExistence type="inferred from homology"/>
<protein>
    <recommendedName>
        <fullName evidence="1">NADH-quinone oxidoreductase subunit K</fullName>
        <ecNumber evidence="1">7.1.1.-</ecNumber>
    </recommendedName>
    <alternativeName>
        <fullName evidence="1">NADH dehydrogenase I subunit K</fullName>
    </alternativeName>
    <alternativeName>
        <fullName evidence="1">NDH-1 subunit K</fullName>
    </alternativeName>
</protein>
<name>NUOK_NITEU</name>